<organism>
    <name type="scientific">Xanthomonas oryzae pv. oryzae (strain KACC10331 / KXO85)</name>
    <dbReference type="NCBI Taxonomy" id="291331"/>
    <lineage>
        <taxon>Bacteria</taxon>
        <taxon>Pseudomonadati</taxon>
        <taxon>Pseudomonadota</taxon>
        <taxon>Gammaproteobacteria</taxon>
        <taxon>Lysobacterales</taxon>
        <taxon>Lysobacteraceae</taxon>
        <taxon>Xanthomonas</taxon>
    </lineage>
</organism>
<feature type="chain" id="PRO_0000258785" description="Large ribosomal subunit protein bL35">
    <location>
        <begin position="1"/>
        <end position="65"/>
    </location>
</feature>
<proteinExistence type="inferred from homology"/>
<accession>Q5GXY2</accession>
<name>RL35_XANOR</name>
<comment type="similarity">
    <text evidence="1">Belongs to the bacterial ribosomal protein bL35 family.</text>
</comment>
<evidence type="ECO:0000255" key="1">
    <source>
        <dbReference type="HAMAP-Rule" id="MF_00514"/>
    </source>
</evidence>
<evidence type="ECO:0000305" key="2"/>
<reference key="1">
    <citation type="journal article" date="2005" name="Nucleic Acids Res.">
        <title>The genome sequence of Xanthomonas oryzae pathovar oryzae KACC10331, the bacterial blight pathogen of rice.</title>
        <authorList>
            <person name="Lee B.-M."/>
            <person name="Park Y.-J."/>
            <person name="Park D.-S."/>
            <person name="Kang H.-W."/>
            <person name="Kim J.-G."/>
            <person name="Song E.-S."/>
            <person name="Park I.-C."/>
            <person name="Yoon U.-H."/>
            <person name="Hahn J.-H."/>
            <person name="Koo B.-S."/>
            <person name="Lee G.-B."/>
            <person name="Kim H."/>
            <person name="Park H.-S."/>
            <person name="Yoon K.-O."/>
            <person name="Kim J.-H."/>
            <person name="Jung C.-H."/>
            <person name="Koh N.-H."/>
            <person name="Seo J.-S."/>
            <person name="Go S.-J."/>
        </authorList>
    </citation>
    <scope>NUCLEOTIDE SEQUENCE [LARGE SCALE GENOMIC DNA]</scope>
    <source>
        <strain>KACC10331 / KXO85</strain>
    </source>
</reference>
<gene>
    <name evidence="1" type="primary">rpmI</name>
    <name type="ordered locus">XOO3185</name>
</gene>
<dbReference type="EMBL" id="AE013598">
    <property type="protein sequence ID" value="AAW76439.1"/>
    <property type="molecule type" value="Genomic_DNA"/>
</dbReference>
<dbReference type="SMR" id="Q5GXY2"/>
<dbReference type="STRING" id="291331.XOO3185"/>
<dbReference type="KEGG" id="xoo:XOO3185"/>
<dbReference type="HOGENOM" id="CLU_169643_4_3_6"/>
<dbReference type="Proteomes" id="UP000006735">
    <property type="component" value="Chromosome"/>
</dbReference>
<dbReference type="GO" id="GO:0022625">
    <property type="term" value="C:cytosolic large ribosomal subunit"/>
    <property type="evidence" value="ECO:0007669"/>
    <property type="project" value="TreeGrafter"/>
</dbReference>
<dbReference type="GO" id="GO:0003735">
    <property type="term" value="F:structural constituent of ribosome"/>
    <property type="evidence" value="ECO:0007669"/>
    <property type="project" value="InterPro"/>
</dbReference>
<dbReference type="GO" id="GO:0006412">
    <property type="term" value="P:translation"/>
    <property type="evidence" value="ECO:0007669"/>
    <property type="project" value="UniProtKB-UniRule"/>
</dbReference>
<dbReference type="FunFam" id="4.10.410.60:FF:000001">
    <property type="entry name" value="50S ribosomal protein L35"/>
    <property type="match status" value="1"/>
</dbReference>
<dbReference type="Gene3D" id="4.10.410.60">
    <property type="match status" value="1"/>
</dbReference>
<dbReference type="HAMAP" id="MF_00514">
    <property type="entry name" value="Ribosomal_bL35"/>
    <property type="match status" value="1"/>
</dbReference>
<dbReference type="InterPro" id="IPR001706">
    <property type="entry name" value="Ribosomal_bL35"/>
</dbReference>
<dbReference type="InterPro" id="IPR021137">
    <property type="entry name" value="Ribosomal_bL35-like"/>
</dbReference>
<dbReference type="InterPro" id="IPR018265">
    <property type="entry name" value="Ribosomal_bL35_CS"/>
</dbReference>
<dbReference type="InterPro" id="IPR037229">
    <property type="entry name" value="Ribosomal_bL35_sf"/>
</dbReference>
<dbReference type="NCBIfam" id="TIGR00001">
    <property type="entry name" value="rpmI_bact"/>
    <property type="match status" value="1"/>
</dbReference>
<dbReference type="PANTHER" id="PTHR33343">
    <property type="entry name" value="54S RIBOSOMAL PROTEIN BL35M"/>
    <property type="match status" value="1"/>
</dbReference>
<dbReference type="PANTHER" id="PTHR33343:SF1">
    <property type="entry name" value="LARGE RIBOSOMAL SUBUNIT PROTEIN BL35M"/>
    <property type="match status" value="1"/>
</dbReference>
<dbReference type="Pfam" id="PF01632">
    <property type="entry name" value="Ribosomal_L35p"/>
    <property type="match status" value="1"/>
</dbReference>
<dbReference type="PRINTS" id="PR00064">
    <property type="entry name" value="RIBOSOMALL35"/>
</dbReference>
<dbReference type="SUPFAM" id="SSF143034">
    <property type="entry name" value="L35p-like"/>
    <property type="match status" value="1"/>
</dbReference>
<dbReference type="PROSITE" id="PS00936">
    <property type="entry name" value="RIBOSOMAL_L35"/>
    <property type="match status" value="1"/>
</dbReference>
<keyword id="KW-1185">Reference proteome</keyword>
<keyword id="KW-0687">Ribonucleoprotein</keyword>
<keyword id="KW-0689">Ribosomal protein</keyword>
<sequence>MPKIKTNRAAAKRFRKTASGKYKCGHANRSHILTKKATKRKRNLRQTNHVRAEDAGRLDRMLPYL</sequence>
<protein>
    <recommendedName>
        <fullName evidence="1">Large ribosomal subunit protein bL35</fullName>
    </recommendedName>
    <alternativeName>
        <fullName evidence="2">50S ribosomal protein L35</fullName>
    </alternativeName>
</protein>